<proteinExistence type="evidence at protein level"/>
<evidence type="ECO:0000256" key="1">
    <source>
        <dbReference type="SAM" id="MobiDB-lite"/>
    </source>
</evidence>
<evidence type="ECO:0000269" key="2">
    <source>
    </source>
</evidence>
<evidence type="ECO:0000269" key="3">
    <source>
    </source>
</evidence>
<evidence type="ECO:0000305" key="4"/>
<accession>Q09731</accession>
<accession>Q9USE0</accession>
<name>BU107_SCHPO</name>
<protein>
    <recommendedName>
        <fullName>UBP9-binding protein bun107</fullName>
    </recommendedName>
    <alternativeName>
        <fullName>Binding ubp9 protein of 107 kDa</fullName>
    </alternativeName>
</protein>
<organism>
    <name type="scientific">Schizosaccharomyces pombe (strain 972 / ATCC 24843)</name>
    <name type="common">Fission yeast</name>
    <dbReference type="NCBI Taxonomy" id="284812"/>
    <lineage>
        <taxon>Eukaryota</taxon>
        <taxon>Fungi</taxon>
        <taxon>Dikarya</taxon>
        <taxon>Ascomycota</taxon>
        <taxon>Taphrinomycotina</taxon>
        <taxon>Schizosaccharomycetes</taxon>
        <taxon>Schizosaccharomycetales</taxon>
        <taxon>Schizosaccharomycetaceae</taxon>
        <taxon>Schizosaccharomyces</taxon>
    </lineage>
</organism>
<sequence length="962" mass="107276">MSVRKRYKVTYVLDSCNDQLGHRLDANCLVLGRYFSEQGSAPVTRALYSGGRDGQLFGWDIGYDYGKASQPLAKIQAHSAWVNDIALTHDSEGVISCSSDSTVKLWKPHVLNASCLSTIGEHTDYVKRVSIPKYSKSPLVASGGLDKRIIVWDYNVGQEVMRFEQLPDCSLVVGPRSGVYSLAANNNIIANGGLQKDIQLWDCVSKKRITDLVGHTDNVRDILISDDGRTILTASSDATIKLWSLRAQKCLFSFIAHSDSVWALYSEHPDLKVFYAGDRSGLITRTDIRNQPNNQSCTAICKQDAPVSDIVARQSFIWSTSRDGSILRWKDEPLFNQDVGAALSKHTSSHLSVSSDCPSRHSSDIRNHSCPTLYHDDAEDIYYDLHHTESYSNINLTKTPDYVIHGGIGLLKYRMLGDRRHVLTEDAVGNKCLWDILACKQAGEFDKSEDFEKIVQSLDTVQAIPRWASVNCLLGILAVTLDENHYMDAEIYADECPLLKVDSPSDKRINLGVWILKNLFREFIDAELHRDLKFRQNLDVVRSEAKKQIEAQREEARKGNVNMPSALSPLRIRSRPSPLSLPPEPLLSPTIDYSATPFPLEPPPESPGPSLQIPSNNPVYTNLTDTDSMMGAPDYFSIPARQNRNRKPHTEVVGSPTVVRTKEIIPPKVTREGSFMGRLKKLGRSKSSKSLQTDFMKASVERAASSRVFSTGTSVTSPQALSKTNNTVNNAANTENNTLAKDKQQTSEASSPGTPRELKTTGELIEDLHEQYVHFKDKDTVLSLMKPPNDDTFPMLNLSSQITVIISEESPEAGNSRDIYRSTLENMADDIDLLENIMPFWLGRLLLLNEFPSKTAPTVNFTLQPFPGSGLPLIVNENTRLSASAMLRAQKIMDYSYSKLSQQRKDVSSLQFRCKDVVVTPKMTLATVKARIWRSGDDVVFHYDVAPRSVSEIVDKTQSLNI</sequence>
<keyword id="KW-0963">Cytoplasm</keyword>
<keyword id="KW-0597">Phosphoprotein</keyword>
<keyword id="KW-1185">Reference proteome</keyword>
<keyword id="KW-0677">Repeat</keyword>
<keyword id="KW-0853">WD repeat</keyword>
<feature type="chain" id="PRO_0000051487" description="UBP9-binding protein bun107">
    <location>
        <begin position="1"/>
        <end position="962"/>
    </location>
</feature>
<feature type="repeat" description="WD 1">
    <location>
        <begin position="25"/>
        <end position="69"/>
    </location>
</feature>
<feature type="repeat" description="WD 2">
    <location>
        <begin position="77"/>
        <end position="116"/>
    </location>
</feature>
<feature type="repeat" description="WD 3">
    <location>
        <begin position="121"/>
        <end position="162"/>
    </location>
</feature>
<feature type="repeat" description="WD 4">
    <location>
        <begin position="172"/>
        <end position="211"/>
    </location>
</feature>
<feature type="repeat" description="WD 5">
    <location>
        <begin position="214"/>
        <end position="253"/>
    </location>
</feature>
<feature type="repeat" description="WD 6">
    <location>
        <begin position="302"/>
        <end position="339"/>
    </location>
</feature>
<feature type="region of interest" description="Disordered" evidence="1">
    <location>
        <begin position="568"/>
        <end position="615"/>
    </location>
</feature>
<feature type="region of interest" description="Disordered" evidence="1">
    <location>
        <begin position="702"/>
        <end position="758"/>
    </location>
</feature>
<feature type="compositionally biased region" description="Low complexity" evidence="1">
    <location>
        <begin position="568"/>
        <end position="578"/>
    </location>
</feature>
<feature type="compositionally biased region" description="Polar residues" evidence="1">
    <location>
        <begin position="707"/>
        <end position="723"/>
    </location>
</feature>
<feature type="compositionally biased region" description="Low complexity" evidence="1">
    <location>
        <begin position="724"/>
        <end position="738"/>
    </location>
</feature>
<feature type="modified residue" description="Phosphoserine" evidence="2">
    <location>
        <position position="717"/>
    </location>
</feature>
<feature type="sequence conflict" description="In Ref. 2; BAA87136." evidence="4" ref="2">
    <original>S</original>
    <variation>Y</variation>
    <location>
        <position position="822"/>
    </location>
</feature>
<dbReference type="EMBL" id="CU329670">
    <property type="protein sequence ID" value="CAA90472.1"/>
    <property type="molecule type" value="Genomic_DNA"/>
</dbReference>
<dbReference type="EMBL" id="AB027832">
    <property type="protein sequence ID" value="BAA87136.1"/>
    <property type="molecule type" value="Genomic_DNA"/>
</dbReference>
<dbReference type="PIR" id="S58107">
    <property type="entry name" value="S58107"/>
</dbReference>
<dbReference type="RefSeq" id="NP_592926.1">
    <property type="nucleotide sequence ID" value="NM_001018327.2"/>
</dbReference>
<dbReference type="SMR" id="Q09731"/>
<dbReference type="BioGRID" id="279591">
    <property type="interactions" value="82"/>
</dbReference>
<dbReference type="FunCoup" id="Q09731">
    <property type="interactions" value="688"/>
</dbReference>
<dbReference type="STRING" id="284812.Q09731"/>
<dbReference type="iPTMnet" id="Q09731"/>
<dbReference type="PaxDb" id="4896-SPAC31A2.14.1"/>
<dbReference type="EnsemblFungi" id="SPAC31A2.14.1">
    <property type="protein sequence ID" value="SPAC31A2.14.1:pep"/>
    <property type="gene ID" value="SPAC31A2.14"/>
</dbReference>
<dbReference type="GeneID" id="2543160"/>
<dbReference type="KEGG" id="spo:2543160"/>
<dbReference type="PomBase" id="SPAC31A2.14">
    <property type="gene designation" value="bun107"/>
</dbReference>
<dbReference type="VEuPathDB" id="FungiDB:SPAC31A2.14"/>
<dbReference type="eggNOG" id="KOG0308">
    <property type="taxonomic scope" value="Eukaryota"/>
</dbReference>
<dbReference type="HOGENOM" id="CLU_002197_0_0_1"/>
<dbReference type="InParanoid" id="Q09731"/>
<dbReference type="OMA" id="PMWLGDV"/>
<dbReference type="PhylomeDB" id="Q09731"/>
<dbReference type="Reactome" id="R-SPO-110314">
    <property type="pathway name" value="Recognition of DNA damage by PCNA-containing replication complex"/>
</dbReference>
<dbReference type="Reactome" id="R-SPO-5689880">
    <property type="pathway name" value="Ub-specific processing proteases"/>
</dbReference>
<dbReference type="PRO" id="PR:Q09731"/>
<dbReference type="Proteomes" id="UP000002485">
    <property type="component" value="Chromosome I"/>
</dbReference>
<dbReference type="GO" id="GO:0051285">
    <property type="term" value="C:cell cortex of cell tip"/>
    <property type="evidence" value="ECO:0007005"/>
    <property type="project" value="PomBase"/>
</dbReference>
<dbReference type="GO" id="GO:0032153">
    <property type="term" value="C:cell division site"/>
    <property type="evidence" value="ECO:0007005"/>
    <property type="project" value="PomBase"/>
</dbReference>
<dbReference type="GO" id="GO:0051286">
    <property type="term" value="C:cell tip"/>
    <property type="evidence" value="ECO:0007005"/>
    <property type="project" value="PomBase"/>
</dbReference>
<dbReference type="GO" id="GO:0005829">
    <property type="term" value="C:cytosol"/>
    <property type="evidence" value="ECO:0007005"/>
    <property type="project" value="PomBase"/>
</dbReference>
<dbReference type="GO" id="GO:0043130">
    <property type="term" value="F:ubiquitin binding"/>
    <property type="evidence" value="ECO:0000318"/>
    <property type="project" value="GO_Central"/>
</dbReference>
<dbReference type="GO" id="GO:0000724">
    <property type="term" value="P:double-strand break repair via homologous recombination"/>
    <property type="evidence" value="ECO:0000318"/>
    <property type="project" value="GO_Central"/>
</dbReference>
<dbReference type="CDD" id="cd17041">
    <property type="entry name" value="Ubl_WDR48"/>
    <property type="match status" value="1"/>
</dbReference>
<dbReference type="CDD" id="cd00200">
    <property type="entry name" value="WD40"/>
    <property type="match status" value="1"/>
</dbReference>
<dbReference type="Gene3D" id="2.130.10.10">
    <property type="entry name" value="YVTN repeat-like/Quinoprotein amine dehydrogenase"/>
    <property type="match status" value="2"/>
</dbReference>
<dbReference type="InterPro" id="IPR015943">
    <property type="entry name" value="WD40/YVTN_repeat-like_dom_sf"/>
</dbReference>
<dbReference type="InterPro" id="IPR036322">
    <property type="entry name" value="WD40_repeat_dom_sf"/>
</dbReference>
<dbReference type="InterPro" id="IPR001680">
    <property type="entry name" value="WD40_rpt"/>
</dbReference>
<dbReference type="InterPro" id="IPR051246">
    <property type="entry name" value="WDR48"/>
</dbReference>
<dbReference type="InterPro" id="IPR021772">
    <property type="entry name" value="WDR48/Bun107"/>
</dbReference>
<dbReference type="PANTHER" id="PTHR19862">
    <property type="entry name" value="WD REPEAT-CONTAINING PROTEIN 48"/>
    <property type="match status" value="1"/>
</dbReference>
<dbReference type="PANTHER" id="PTHR19862:SF14">
    <property type="entry name" value="WD REPEAT-CONTAINING PROTEIN 48"/>
    <property type="match status" value="1"/>
</dbReference>
<dbReference type="Pfam" id="PF11816">
    <property type="entry name" value="DUF3337"/>
    <property type="match status" value="1"/>
</dbReference>
<dbReference type="Pfam" id="PF00400">
    <property type="entry name" value="WD40"/>
    <property type="match status" value="3"/>
</dbReference>
<dbReference type="SMART" id="SM00320">
    <property type="entry name" value="WD40"/>
    <property type="match status" value="7"/>
</dbReference>
<dbReference type="SUPFAM" id="SSF50978">
    <property type="entry name" value="WD40 repeat-like"/>
    <property type="match status" value="1"/>
</dbReference>
<dbReference type="PROSITE" id="PS00678">
    <property type="entry name" value="WD_REPEATS_1"/>
    <property type="match status" value="1"/>
</dbReference>
<dbReference type="PROSITE" id="PS50082">
    <property type="entry name" value="WD_REPEATS_2"/>
    <property type="match status" value="3"/>
</dbReference>
<dbReference type="PROSITE" id="PS50294">
    <property type="entry name" value="WD_REPEATS_REGION"/>
    <property type="match status" value="1"/>
</dbReference>
<gene>
    <name type="primary">bun107</name>
    <name type="synonym">wdr48</name>
    <name type="ORF">SPAC31A2.14</name>
</gene>
<reference key="1">
    <citation type="journal article" date="2002" name="Nature">
        <title>The genome sequence of Schizosaccharomyces pombe.</title>
        <authorList>
            <person name="Wood V."/>
            <person name="Gwilliam R."/>
            <person name="Rajandream M.A."/>
            <person name="Lyne M.H."/>
            <person name="Lyne R."/>
            <person name="Stewart A."/>
            <person name="Sgouros J.G."/>
            <person name="Peat N."/>
            <person name="Hayles J."/>
            <person name="Baker S.G."/>
            <person name="Basham D."/>
            <person name="Bowman S."/>
            <person name="Brooks K."/>
            <person name="Brown D."/>
            <person name="Brown S."/>
            <person name="Chillingworth T."/>
            <person name="Churcher C.M."/>
            <person name="Collins M."/>
            <person name="Connor R."/>
            <person name="Cronin A."/>
            <person name="Davis P."/>
            <person name="Feltwell T."/>
            <person name="Fraser A."/>
            <person name="Gentles S."/>
            <person name="Goble A."/>
            <person name="Hamlin N."/>
            <person name="Harris D.E."/>
            <person name="Hidalgo J."/>
            <person name="Hodgson G."/>
            <person name="Holroyd S."/>
            <person name="Hornsby T."/>
            <person name="Howarth S."/>
            <person name="Huckle E.J."/>
            <person name="Hunt S."/>
            <person name="Jagels K."/>
            <person name="James K.D."/>
            <person name="Jones L."/>
            <person name="Jones M."/>
            <person name="Leather S."/>
            <person name="McDonald S."/>
            <person name="McLean J."/>
            <person name="Mooney P."/>
            <person name="Moule S."/>
            <person name="Mungall K.L."/>
            <person name="Murphy L.D."/>
            <person name="Niblett D."/>
            <person name="Odell C."/>
            <person name="Oliver K."/>
            <person name="O'Neil S."/>
            <person name="Pearson D."/>
            <person name="Quail M.A."/>
            <person name="Rabbinowitsch E."/>
            <person name="Rutherford K.M."/>
            <person name="Rutter S."/>
            <person name="Saunders D."/>
            <person name="Seeger K."/>
            <person name="Sharp S."/>
            <person name="Skelton J."/>
            <person name="Simmonds M.N."/>
            <person name="Squares R."/>
            <person name="Squares S."/>
            <person name="Stevens K."/>
            <person name="Taylor K."/>
            <person name="Taylor R.G."/>
            <person name="Tivey A."/>
            <person name="Walsh S.V."/>
            <person name="Warren T."/>
            <person name="Whitehead S."/>
            <person name="Woodward J.R."/>
            <person name="Volckaert G."/>
            <person name="Aert R."/>
            <person name="Robben J."/>
            <person name="Grymonprez B."/>
            <person name="Weltjens I."/>
            <person name="Vanstreels E."/>
            <person name="Rieger M."/>
            <person name="Schaefer M."/>
            <person name="Mueller-Auer S."/>
            <person name="Gabel C."/>
            <person name="Fuchs M."/>
            <person name="Duesterhoeft A."/>
            <person name="Fritzc C."/>
            <person name="Holzer E."/>
            <person name="Moestl D."/>
            <person name="Hilbert H."/>
            <person name="Borzym K."/>
            <person name="Langer I."/>
            <person name="Beck A."/>
            <person name="Lehrach H."/>
            <person name="Reinhardt R."/>
            <person name="Pohl T.M."/>
            <person name="Eger P."/>
            <person name="Zimmermann W."/>
            <person name="Wedler H."/>
            <person name="Wambutt R."/>
            <person name="Purnelle B."/>
            <person name="Goffeau A."/>
            <person name="Cadieu E."/>
            <person name="Dreano S."/>
            <person name="Gloux S."/>
            <person name="Lelaure V."/>
            <person name="Mottier S."/>
            <person name="Galibert F."/>
            <person name="Aves S.J."/>
            <person name="Xiang Z."/>
            <person name="Hunt C."/>
            <person name="Moore K."/>
            <person name="Hurst S.M."/>
            <person name="Lucas M."/>
            <person name="Rochet M."/>
            <person name="Gaillardin C."/>
            <person name="Tallada V.A."/>
            <person name="Garzon A."/>
            <person name="Thode G."/>
            <person name="Daga R.R."/>
            <person name="Cruzado L."/>
            <person name="Jimenez J."/>
            <person name="Sanchez M."/>
            <person name="del Rey F."/>
            <person name="Benito J."/>
            <person name="Dominguez A."/>
            <person name="Revuelta J.L."/>
            <person name="Moreno S."/>
            <person name="Armstrong J."/>
            <person name="Forsburg S.L."/>
            <person name="Cerutti L."/>
            <person name="Lowe T."/>
            <person name="McCombie W.R."/>
            <person name="Paulsen I."/>
            <person name="Potashkin J."/>
            <person name="Shpakovski G.V."/>
            <person name="Ussery D."/>
            <person name="Barrell B.G."/>
            <person name="Nurse P."/>
        </authorList>
    </citation>
    <scope>NUCLEOTIDE SEQUENCE [LARGE SCALE GENOMIC DNA]</scope>
    <source>
        <strain>972 / ATCC 24843</strain>
    </source>
</reference>
<reference key="2">
    <citation type="journal article" date="2000" name="Genes Cells">
        <title>Large-scale screening of intracellular protein localization in living fission yeast cells by the use of a GFP-fusion genomic DNA library.</title>
        <authorList>
            <person name="Ding D.-Q."/>
            <person name="Tomita Y."/>
            <person name="Yamamoto A."/>
            <person name="Chikashige Y."/>
            <person name="Haraguchi T."/>
            <person name="Hiraoka Y."/>
        </authorList>
    </citation>
    <scope>NUCLEOTIDE SEQUENCE [LARGE SCALE GENOMIC DNA] OF 800-949</scope>
    <scope>SUBCELLULAR LOCATION</scope>
    <source>
        <strain>ATCC 38364 / 968</strain>
    </source>
</reference>
<reference key="3">
    <citation type="journal article" date="2006" name="Nat. Biotechnol.">
        <title>ORFeome cloning and global analysis of protein localization in the fission yeast Schizosaccharomyces pombe.</title>
        <authorList>
            <person name="Matsuyama A."/>
            <person name="Arai R."/>
            <person name="Yashiroda Y."/>
            <person name="Shirai A."/>
            <person name="Kamata A."/>
            <person name="Sekido S."/>
            <person name="Kobayashi Y."/>
            <person name="Hashimoto A."/>
            <person name="Hamamoto M."/>
            <person name="Hiraoka Y."/>
            <person name="Horinouchi S."/>
            <person name="Yoshida M."/>
        </authorList>
    </citation>
    <scope>SUBCELLULAR LOCATION [LARGE SCALE ANALYSIS]</scope>
</reference>
<reference key="4">
    <citation type="journal article" date="2008" name="J. Proteome Res.">
        <title>Phosphoproteome analysis of fission yeast.</title>
        <authorList>
            <person name="Wilson-Grady J.T."/>
            <person name="Villen J."/>
            <person name="Gygi S.P."/>
        </authorList>
    </citation>
    <scope>PHOSPHORYLATION [LARGE SCALE ANALYSIS] AT SER-717</scope>
    <scope>IDENTIFICATION BY MASS SPECTROMETRY</scope>
</reference>
<reference key="5">
    <citation type="journal article" date="2010" name="PLoS Biol.">
        <title>A global census of fission yeast deubiquitinating enzyme localization and interaction networks reveals distinct compartmentalization profiles and overlapping functions in endocytosis and polarity.</title>
        <authorList>
            <person name="Kouranti I."/>
            <person name="McLean J.R."/>
            <person name="Feoktistova A."/>
            <person name="Liang P."/>
            <person name="Johnson A.E."/>
            <person name="Roberts-Galbraith R.H."/>
            <person name="Gould K.L."/>
        </authorList>
    </citation>
    <scope>FUNCTION</scope>
    <scope>SUBCELLULAR LOCATION</scope>
    <scope>INTERACTION WITH BUN62 AND UBP9</scope>
</reference>
<comment type="function">
    <text evidence="3">Required for the ubp9 recruitment to septa and cell tips but also for its enzymatic activity at these specific locations.</text>
</comment>
<comment type="subunit">
    <text evidence="3">Interacts with ubp9 and bun62.</text>
</comment>
<comment type="subcellular location">
    <subcellularLocation>
        <location>Cytoplasm</location>
    </subcellularLocation>
    <subcellularLocation>
        <location>Cell tip</location>
    </subcellularLocation>
</comment>